<feature type="chain" id="PRO_0000211881" description="UPF0122 protein SE_0911">
    <location>
        <begin position="1"/>
        <end position="110"/>
    </location>
</feature>
<dbReference type="EMBL" id="AE015929">
    <property type="protein sequence ID" value="AAO04508.1"/>
    <property type="molecule type" value="Genomic_DNA"/>
</dbReference>
<dbReference type="RefSeq" id="NP_764466.1">
    <property type="nucleotide sequence ID" value="NC_004461.1"/>
</dbReference>
<dbReference type="RefSeq" id="WP_001830102.1">
    <property type="nucleotide sequence ID" value="NZ_WBME01000001.1"/>
</dbReference>
<dbReference type="SMR" id="Q8CSV1"/>
<dbReference type="KEGG" id="sep:SE_0911"/>
<dbReference type="PATRIC" id="fig|176280.10.peg.884"/>
<dbReference type="eggNOG" id="COG2739">
    <property type="taxonomic scope" value="Bacteria"/>
</dbReference>
<dbReference type="HOGENOM" id="CLU_129218_1_0_9"/>
<dbReference type="OrthoDB" id="6392at2"/>
<dbReference type="Proteomes" id="UP000001411">
    <property type="component" value="Chromosome"/>
</dbReference>
<dbReference type="Gene3D" id="1.10.10.10">
    <property type="entry name" value="Winged helix-like DNA-binding domain superfamily/Winged helix DNA-binding domain"/>
    <property type="match status" value="1"/>
</dbReference>
<dbReference type="HAMAP" id="MF_00245">
    <property type="entry name" value="UPF0122"/>
    <property type="match status" value="1"/>
</dbReference>
<dbReference type="InterPro" id="IPR013324">
    <property type="entry name" value="RNA_pol_sigma_r3/r4-like"/>
</dbReference>
<dbReference type="InterPro" id="IPR007394">
    <property type="entry name" value="UPF0122"/>
</dbReference>
<dbReference type="InterPro" id="IPR054831">
    <property type="entry name" value="UPF0122_fam_protein"/>
</dbReference>
<dbReference type="InterPro" id="IPR036388">
    <property type="entry name" value="WH-like_DNA-bd_sf"/>
</dbReference>
<dbReference type="NCBIfam" id="NF001067">
    <property type="entry name" value="PRK00118.1-2"/>
    <property type="match status" value="1"/>
</dbReference>
<dbReference type="NCBIfam" id="NF001070">
    <property type="entry name" value="PRK00118.1-6"/>
    <property type="match status" value="1"/>
</dbReference>
<dbReference type="NCBIfam" id="NF045758">
    <property type="entry name" value="YlxM"/>
    <property type="match status" value="1"/>
</dbReference>
<dbReference type="PANTHER" id="PTHR40083">
    <property type="entry name" value="UPF0122 PROTEIN CBO2450/CLC_2298"/>
    <property type="match status" value="1"/>
</dbReference>
<dbReference type="PANTHER" id="PTHR40083:SF1">
    <property type="entry name" value="UPF0122 PROTEIN YLXM"/>
    <property type="match status" value="1"/>
</dbReference>
<dbReference type="Pfam" id="PF04297">
    <property type="entry name" value="UPF0122"/>
    <property type="match status" value="1"/>
</dbReference>
<dbReference type="SUPFAM" id="SSF88659">
    <property type="entry name" value="Sigma3 and sigma4 domains of RNA polymerase sigma factors"/>
    <property type="match status" value="1"/>
</dbReference>
<proteinExistence type="inferred from homology"/>
<sequence length="110" mass="13533">MGQNDLVKTLRMNYLFDFYQSLLTNKQKNYLEFFYLQDYSLSEIADTFEVSRQAVYDNIRRTGDLVEDYESKLRLYQRFEKRRELYNLMKQSLNQPELLKQYITQLEELE</sequence>
<name>Y911_STAES</name>
<accession>Q8CSV1</accession>
<gene>
    <name type="ordered locus">SE_0911</name>
</gene>
<reference key="1">
    <citation type="journal article" date="2003" name="Mol. Microbiol.">
        <title>Genome-based analysis of virulence genes in a non-biofilm-forming Staphylococcus epidermidis strain (ATCC 12228).</title>
        <authorList>
            <person name="Zhang Y.-Q."/>
            <person name="Ren S.-X."/>
            <person name="Li H.-L."/>
            <person name="Wang Y.-X."/>
            <person name="Fu G."/>
            <person name="Yang J."/>
            <person name="Qin Z.-Q."/>
            <person name="Miao Y.-G."/>
            <person name="Wang W.-Y."/>
            <person name="Chen R.-S."/>
            <person name="Shen Y."/>
            <person name="Chen Z."/>
            <person name="Yuan Z.-H."/>
            <person name="Zhao G.-P."/>
            <person name="Qu D."/>
            <person name="Danchin A."/>
            <person name="Wen Y.-M."/>
        </authorList>
    </citation>
    <scope>NUCLEOTIDE SEQUENCE [LARGE SCALE GENOMIC DNA]</scope>
    <source>
        <strain>ATCC 12228 / FDA PCI 1200</strain>
    </source>
</reference>
<evidence type="ECO:0000255" key="1">
    <source>
        <dbReference type="HAMAP-Rule" id="MF_00245"/>
    </source>
</evidence>
<organism>
    <name type="scientific">Staphylococcus epidermidis (strain ATCC 12228 / FDA PCI 1200)</name>
    <dbReference type="NCBI Taxonomy" id="176280"/>
    <lineage>
        <taxon>Bacteria</taxon>
        <taxon>Bacillati</taxon>
        <taxon>Bacillota</taxon>
        <taxon>Bacilli</taxon>
        <taxon>Bacillales</taxon>
        <taxon>Staphylococcaceae</taxon>
        <taxon>Staphylococcus</taxon>
    </lineage>
</organism>
<protein>
    <recommendedName>
        <fullName evidence="1">UPF0122 protein SE_0911</fullName>
    </recommendedName>
</protein>
<comment type="function">
    <text evidence="1">Might take part in the signal recognition particle (SRP) pathway. This is inferred from the conservation of its genetic proximity to ftsY/ffh. May be a regulatory protein.</text>
</comment>
<comment type="similarity">
    <text evidence="1">Belongs to the UPF0122 family.</text>
</comment>